<gene>
    <name type="ordered locus">sll1766</name>
</gene>
<comment type="cofactor">
    <cofactor evidence="1">
        <name>[4Fe-4S] cluster</name>
        <dbReference type="ChEBI" id="CHEBI:49883"/>
    </cofactor>
</comment>
<comment type="similarity">
    <text evidence="2">Belongs to the radical SAM superfamily. Anaerobic sulfatase-maturating enzyme family.</text>
</comment>
<sequence length="398" mass="45702">MQALVNQTQPINESIRDVDITNFGPTNLIIIQPTSYCNLDCDYCYLPDRHLKNHLPLDLLEPIMQAIFASPFTTSNFSLCWHAGEPLAAGLEFYRQAFAKIETYGEKYNHRQLWFDHSFQSNGILINQAWCDLFKQYPVHVGISLDGPAFLHDKHRKTRTGRGSHAATMRGIEWLQKNDICHSVIAVLTEESLDYPDEIFHFFRDHNLLDVGFNMEETEGINTESSLNKQGTLQKYRQFLERFWQLTSTSEPEFRVREFECLCNLIYTEDRLDHTDMNRPFAIVSIDHQGNFSTFDPELLAIKTPQYGDFIFGNVLTDSFASICQTEKFQRIYHDMTQGVEKCRQTCDYFGLCGGGAGSNKFWENGSFNSTETLACRFRIQQVAEVVIGALEESLGLA</sequence>
<proteinExistence type="inferred from homology"/>
<keyword id="KW-0004">4Fe-4S</keyword>
<keyword id="KW-0408">Iron</keyword>
<keyword id="KW-0411">Iron-sulfur</keyword>
<keyword id="KW-0479">Metal-binding</keyword>
<keyword id="KW-1185">Reference proteome</keyword>
<keyword id="KW-0949">S-adenosyl-L-methionine</keyword>
<dbReference type="EMBL" id="BA000022">
    <property type="protein sequence ID" value="BAA17684.1"/>
    <property type="molecule type" value="Genomic_DNA"/>
</dbReference>
<dbReference type="PIR" id="S77126">
    <property type="entry name" value="S77126"/>
</dbReference>
<dbReference type="SMR" id="P73639"/>
<dbReference type="IntAct" id="P73639">
    <property type="interactions" value="1"/>
</dbReference>
<dbReference type="STRING" id="1148.gene:10498551"/>
<dbReference type="PaxDb" id="1148-1652765"/>
<dbReference type="EnsemblBacteria" id="BAA17684">
    <property type="protein sequence ID" value="BAA17684"/>
    <property type="gene ID" value="BAA17684"/>
</dbReference>
<dbReference type="KEGG" id="syn:sll1766"/>
<dbReference type="eggNOG" id="COG0641">
    <property type="taxonomic scope" value="Bacteria"/>
</dbReference>
<dbReference type="InParanoid" id="P73639"/>
<dbReference type="PhylomeDB" id="P73639"/>
<dbReference type="Proteomes" id="UP000001425">
    <property type="component" value="Chromosome"/>
</dbReference>
<dbReference type="GO" id="GO:0051539">
    <property type="term" value="F:4 iron, 4 sulfur cluster binding"/>
    <property type="evidence" value="ECO:0007669"/>
    <property type="project" value="UniProtKB-KW"/>
</dbReference>
<dbReference type="GO" id="GO:0046872">
    <property type="term" value="F:metal ion binding"/>
    <property type="evidence" value="ECO:0007669"/>
    <property type="project" value="UniProtKB-KW"/>
</dbReference>
<dbReference type="GO" id="GO:0016491">
    <property type="term" value="F:oxidoreductase activity"/>
    <property type="evidence" value="ECO:0007669"/>
    <property type="project" value="InterPro"/>
</dbReference>
<dbReference type="CDD" id="cd01335">
    <property type="entry name" value="Radical_SAM"/>
    <property type="match status" value="1"/>
</dbReference>
<dbReference type="Gene3D" id="3.20.20.70">
    <property type="entry name" value="Aldolase class I"/>
    <property type="match status" value="1"/>
</dbReference>
<dbReference type="InterPro" id="IPR013785">
    <property type="entry name" value="Aldolase_TIM"/>
</dbReference>
<dbReference type="InterPro" id="IPR007197">
    <property type="entry name" value="rSAM"/>
</dbReference>
<dbReference type="InterPro" id="IPR026357">
    <property type="entry name" value="rSAM_SPASM_GrrM_OscB"/>
</dbReference>
<dbReference type="InterPro" id="IPR023867">
    <property type="entry name" value="Sulphatase_maturase_rSAM"/>
</dbReference>
<dbReference type="NCBIfam" id="TIGR04261">
    <property type="entry name" value="rSAM_GlyRichRpt"/>
    <property type="match status" value="1"/>
</dbReference>
<dbReference type="PANTHER" id="PTHR43273">
    <property type="entry name" value="ANAEROBIC SULFATASE-MATURATING ENZYME HOMOLOG ASLB-RELATED"/>
    <property type="match status" value="1"/>
</dbReference>
<dbReference type="PANTHER" id="PTHR43273:SF8">
    <property type="entry name" value="RADICAL SAM DOMAIN PROTEIN"/>
    <property type="match status" value="1"/>
</dbReference>
<dbReference type="Pfam" id="PF04055">
    <property type="entry name" value="Radical_SAM"/>
    <property type="match status" value="1"/>
</dbReference>
<dbReference type="SFLD" id="SFLDG01072">
    <property type="entry name" value="dehydrogenase_like"/>
    <property type="match status" value="1"/>
</dbReference>
<dbReference type="SFLD" id="SFLDS00029">
    <property type="entry name" value="Radical_SAM"/>
    <property type="match status" value="1"/>
</dbReference>
<dbReference type="SUPFAM" id="SSF102114">
    <property type="entry name" value="Radical SAM enzymes"/>
    <property type="match status" value="1"/>
</dbReference>
<dbReference type="PROSITE" id="PS51918">
    <property type="entry name" value="RADICAL_SAM"/>
    <property type="match status" value="1"/>
</dbReference>
<feature type="chain" id="PRO_0000134464" description="Uncharacterized protein sll1766">
    <location>
        <begin position="1"/>
        <end position="398"/>
    </location>
</feature>
<feature type="domain" description="Radical SAM core" evidence="1">
    <location>
        <begin position="21"/>
        <end position="253"/>
    </location>
</feature>
<feature type="binding site" evidence="1">
    <location>
        <position position="37"/>
    </location>
    <ligand>
        <name>[4Fe-4S] cluster</name>
        <dbReference type="ChEBI" id="CHEBI:49883"/>
        <note>4Fe-4S-S-AdoMet</note>
    </ligand>
</feature>
<feature type="binding site" evidence="1">
    <location>
        <position position="41"/>
    </location>
    <ligand>
        <name>[4Fe-4S] cluster</name>
        <dbReference type="ChEBI" id="CHEBI:49883"/>
        <note>4Fe-4S-S-AdoMet</note>
    </ligand>
</feature>
<feature type="binding site" evidence="1">
    <location>
        <position position="44"/>
    </location>
    <ligand>
        <name>[4Fe-4S] cluster</name>
        <dbReference type="ChEBI" id="CHEBI:49883"/>
        <note>4Fe-4S-S-AdoMet</note>
    </ligand>
</feature>
<organism>
    <name type="scientific">Synechocystis sp. (strain ATCC 27184 / PCC 6803 / Kazusa)</name>
    <dbReference type="NCBI Taxonomy" id="1111708"/>
    <lineage>
        <taxon>Bacteria</taxon>
        <taxon>Bacillati</taxon>
        <taxon>Cyanobacteriota</taxon>
        <taxon>Cyanophyceae</taxon>
        <taxon>Synechococcales</taxon>
        <taxon>Merismopediaceae</taxon>
        <taxon>Synechocystis</taxon>
    </lineage>
</organism>
<reference key="1">
    <citation type="journal article" date="1996" name="DNA Res.">
        <title>Sequence analysis of the genome of the unicellular cyanobacterium Synechocystis sp. strain PCC6803. II. Sequence determination of the entire genome and assignment of potential protein-coding regions.</title>
        <authorList>
            <person name="Kaneko T."/>
            <person name="Sato S."/>
            <person name="Kotani H."/>
            <person name="Tanaka A."/>
            <person name="Asamizu E."/>
            <person name="Nakamura Y."/>
            <person name="Miyajima N."/>
            <person name="Hirosawa M."/>
            <person name="Sugiura M."/>
            <person name="Sasamoto S."/>
            <person name="Kimura T."/>
            <person name="Hosouchi T."/>
            <person name="Matsuno A."/>
            <person name="Muraki A."/>
            <person name="Nakazaki N."/>
            <person name="Naruo K."/>
            <person name="Okumura S."/>
            <person name="Shimpo S."/>
            <person name="Takeuchi C."/>
            <person name="Wada T."/>
            <person name="Watanabe A."/>
            <person name="Yamada M."/>
            <person name="Yasuda M."/>
            <person name="Tabata S."/>
        </authorList>
    </citation>
    <scope>NUCLEOTIDE SEQUENCE [LARGE SCALE GENOMIC DNA]</scope>
    <source>
        <strain>ATCC 27184 / PCC 6803 / Kazusa</strain>
    </source>
</reference>
<protein>
    <recommendedName>
        <fullName>Uncharacterized protein sll1766</fullName>
    </recommendedName>
</protein>
<name>Y1766_SYNY3</name>
<evidence type="ECO:0000255" key="1">
    <source>
        <dbReference type="PROSITE-ProRule" id="PRU01266"/>
    </source>
</evidence>
<evidence type="ECO:0000305" key="2"/>
<accession>P73639</accession>